<comment type="function">
    <text evidence="1">Endonuclease IV plays a role in DNA repair. It cleaves phosphodiester bonds at apurinic or apyrimidinic (AP) sites, generating a 3'-hydroxyl group and a 5'-terminal sugar phosphate.</text>
</comment>
<comment type="catalytic activity">
    <reaction evidence="1">
        <text>Endonucleolytic cleavage to 5'-phosphooligonucleotide end-products.</text>
        <dbReference type="EC" id="3.1.21.2"/>
    </reaction>
</comment>
<comment type="cofactor">
    <cofactor evidence="1">
        <name>Zn(2+)</name>
        <dbReference type="ChEBI" id="CHEBI:29105"/>
    </cofactor>
    <text evidence="1">Binds 3 Zn(2+) ions.</text>
</comment>
<comment type="similarity">
    <text evidence="1">Belongs to the AP endonuclease 2 family.</text>
</comment>
<accession>B5RC42</accession>
<proteinExistence type="inferred from homology"/>
<reference key="1">
    <citation type="journal article" date="2008" name="Genome Res.">
        <title>Comparative genome analysis of Salmonella enteritidis PT4 and Salmonella gallinarum 287/91 provides insights into evolutionary and host adaptation pathways.</title>
        <authorList>
            <person name="Thomson N.R."/>
            <person name="Clayton D.J."/>
            <person name="Windhorst D."/>
            <person name="Vernikos G."/>
            <person name="Davidson S."/>
            <person name="Churcher C."/>
            <person name="Quail M.A."/>
            <person name="Stevens M."/>
            <person name="Jones M.A."/>
            <person name="Watson M."/>
            <person name="Barron A."/>
            <person name="Layton A."/>
            <person name="Pickard D."/>
            <person name="Kingsley R.A."/>
            <person name="Bignell A."/>
            <person name="Clark L."/>
            <person name="Harris B."/>
            <person name="Ormond D."/>
            <person name="Abdellah Z."/>
            <person name="Brooks K."/>
            <person name="Cherevach I."/>
            <person name="Chillingworth T."/>
            <person name="Woodward J."/>
            <person name="Norberczak H."/>
            <person name="Lord A."/>
            <person name="Arrowsmith C."/>
            <person name="Jagels K."/>
            <person name="Moule S."/>
            <person name="Mungall K."/>
            <person name="Saunders M."/>
            <person name="Whitehead S."/>
            <person name="Chabalgoity J.A."/>
            <person name="Maskell D."/>
            <person name="Humphreys T."/>
            <person name="Roberts M."/>
            <person name="Barrow P.A."/>
            <person name="Dougan G."/>
            <person name="Parkhill J."/>
        </authorList>
    </citation>
    <scope>NUCLEOTIDE SEQUENCE [LARGE SCALE GENOMIC DNA]</scope>
    <source>
        <strain>287/91 / NCTC 13346</strain>
    </source>
</reference>
<gene>
    <name evidence="1" type="primary">nfo</name>
    <name type="ordered locus">SG2240</name>
</gene>
<evidence type="ECO:0000255" key="1">
    <source>
        <dbReference type="HAMAP-Rule" id="MF_00152"/>
    </source>
</evidence>
<sequence length="285" mass="31212">MKYIGAHVSAAGGLANAPARAAEIGATAFALFTKNQRQWRAAPLTPQVIDDFKIACEKYHFSAAQILPHDSYLINLGHPVSEALEKSRDAFLDEMQRCEQLGLTLLNFHPGSHLMQIAQEDCLARIAESINIALAQTEGVTAVIENTAGQGSNLGFEFEQLAAIIDGVEDKSRVGVCIDTCHAFAAGYDLRTPEACEKTFSEFGKIVGFQYLRGMHLNDAKSAFGSRVDRHHSLGEGNIGHDAFRWIMQDGRFDGIPLILETINPDIWAEEIAWLKAQQIAEAMA</sequence>
<organism>
    <name type="scientific">Salmonella gallinarum (strain 287/91 / NCTC 13346)</name>
    <dbReference type="NCBI Taxonomy" id="550538"/>
    <lineage>
        <taxon>Bacteria</taxon>
        <taxon>Pseudomonadati</taxon>
        <taxon>Pseudomonadota</taxon>
        <taxon>Gammaproteobacteria</taxon>
        <taxon>Enterobacterales</taxon>
        <taxon>Enterobacteriaceae</taxon>
        <taxon>Salmonella</taxon>
    </lineage>
</organism>
<protein>
    <recommendedName>
        <fullName evidence="1">Probable endonuclease 4</fullName>
        <ecNumber evidence="1">3.1.21.2</ecNumber>
    </recommendedName>
    <alternativeName>
        <fullName evidence="1">Endodeoxyribonuclease IV</fullName>
    </alternativeName>
    <alternativeName>
        <fullName evidence="1">Endonuclease IV</fullName>
    </alternativeName>
</protein>
<dbReference type="EC" id="3.1.21.2" evidence="1"/>
<dbReference type="EMBL" id="AM933173">
    <property type="protein sequence ID" value="CAR38074.1"/>
    <property type="molecule type" value="Genomic_DNA"/>
</dbReference>
<dbReference type="RefSeq" id="WP_000873915.1">
    <property type="nucleotide sequence ID" value="NC_011274.1"/>
</dbReference>
<dbReference type="SMR" id="B5RC42"/>
<dbReference type="KEGG" id="seg:SG2240"/>
<dbReference type="HOGENOM" id="CLU_025885_0_4_6"/>
<dbReference type="Proteomes" id="UP000008321">
    <property type="component" value="Chromosome"/>
</dbReference>
<dbReference type="GO" id="GO:0008833">
    <property type="term" value="F:deoxyribonuclease IV (phage-T4-induced) activity"/>
    <property type="evidence" value="ECO:0007669"/>
    <property type="project" value="UniProtKB-UniRule"/>
</dbReference>
<dbReference type="GO" id="GO:0003677">
    <property type="term" value="F:DNA binding"/>
    <property type="evidence" value="ECO:0007669"/>
    <property type="project" value="InterPro"/>
</dbReference>
<dbReference type="GO" id="GO:0003906">
    <property type="term" value="F:DNA-(apurinic or apyrimidinic site) endonuclease activity"/>
    <property type="evidence" value="ECO:0007669"/>
    <property type="project" value="TreeGrafter"/>
</dbReference>
<dbReference type="GO" id="GO:0008081">
    <property type="term" value="F:phosphoric diester hydrolase activity"/>
    <property type="evidence" value="ECO:0007669"/>
    <property type="project" value="TreeGrafter"/>
</dbReference>
<dbReference type="GO" id="GO:0008270">
    <property type="term" value="F:zinc ion binding"/>
    <property type="evidence" value="ECO:0007669"/>
    <property type="project" value="UniProtKB-UniRule"/>
</dbReference>
<dbReference type="GO" id="GO:0006284">
    <property type="term" value="P:base-excision repair"/>
    <property type="evidence" value="ECO:0007669"/>
    <property type="project" value="TreeGrafter"/>
</dbReference>
<dbReference type="CDD" id="cd00019">
    <property type="entry name" value="AP2Ec"/>
    <property type="match status" value="1"/>
</dbReference>
<dbReference type="FunFam" id="3.20.20.150:FF:000001">
    <property type="entry name" value="Probable endonuclease 4"/>
    <property type="match status" value="1"/>
</dbReference>
<dbReference type="Gene3D" id="3.20.20.150">
    <property type="entry name" value="Divalent-metal-dependent TIM barrel enzymes"/>
    <property type="match status" value="1"/>
</dbReference>
<dbReference type="HAMAP" id="MF_00152">
    <property type="entry name" value="Nfo"/>
    <property type="match status" value="1"/>
</dbReference>
<dbReference type="InterPro" id="IPR001719">
    <property type="entry name" value="AP_endonuc_2"/>
</dbReference>
<dbReference type="InterPro" id="IPR018246">
    <property type="entry name" value="AP_endonuc_F2_Zn_BS"/>
</dbReference>
<dbReference type="InterPro" id="IPR036237">
    <property type="entry name" value="Xyl_isomerase-like_sf"/>
</dbReference>
<dbReference type="InterPro" id="IPR013022">
    <property type="entry name" value="Xyl_isomerase-like_TIM-brl"/>
</dbReference>
<dbReference type="NCBIfam" id="TIGR00587">
    <property type="entry name" value="nfo"/>
    <property type="match status" value="1"/>
</dbReference>
<dbReference type="NCBIfam" id="NF002199">
    <property type="entry name" value="PRK01060.1-4"/>
    <property type="match status" value="1"/>
</dbReference>
<dbReference type="PANTHER" id="PTHR21445:SF0">
    <property type="entry name" value="APURINIC-APYRIMIDINIC ENDONUCLEASE"/>
    <property type="match status" value="1"/>
</dbReference>
<dbReference type="PANTHER" id="PTHR21445">
    <property type="entry name" value="ENDONUCLEASE IV ENDODEOXYRIBONUCLEASE IV"/>
    <property type="match status" value="1"/>
</dbReference>
<dbReference type="Pfam" id="PF01261">
    <property type="entry name" value="AP_endonuc_2"/>
    <property type="match status" value="1"/>
</dbReference>
<dbReference type="SMART" id="SM00518">
    <property type="entry name" value="AP2Ec"/>
    <property type="match status" value="1"/>
</dbReference>
<dbReference type="SUPFAM" id="SSF51658">
    <property type="entry name" value="Xylose isomerase-like"/>
    <property type="match status" value="1"/>
</dbReference>
<dbReference type="PROSITE" id="PS00729">
    <property type="entry name" value="AP_NUCLEASE_F2_1"/>
    <property type="match status" value="1"/>
</dbReference>
<dbReference type="PROSITE" id="PS00730">
    <property type="entry name" value="AP_NUCLEASE_F2_2"/>
    <property type="match status" value="1"/>
</dbReference>
<dbReference type="PROSITE" id="PS00731">
    <property type="entry name" value="AP_NUCLEASE_F2_3"/>
    <property type="match status" value="1"/>
</dbReference>
<dbReference type="PROSITE" id="PS51432">
    <property type="entry name" value="AP_NUCLEASE_F2_4"/>
    <property type="match status" value="1"/>
</dbReference>
<name>END4_SALG2</name>
<feature type="chain" id="PRO_1000096901" description="Probable endonuclease 4">
    <location>
        <begin position="1"/>
        <end position="285"/>
    </location>
</feature>
<feature type="binding site" evidence="1">
    <location>
        <position position="69"/>
    </location>
    <ligand>
        <name>Zn(2+)</name>
        <dbReference type="ChEBI" id="CHEBI:29105"/>
        <label>1</label>
    </ligand>
</feature>
<feature type="binding site" evidence="1">
    <location>
        <position position="109"/>
    </location>
    <ligand>
        <name>Zn(2+)</name>
        <dbReference type="ChEBI" id="CHEBI:29105"/>
        <label>1</label>
    </ligand>
</feature>
<feature type="binding site" evidence="1">
    <location>
        <position position="145"/>
    </location>
    <ligand>
        <name>Zn(2+)</name>
        <dbReference type="ChEBI" id="CHEBI:29105"/>
        <label>1</label>
    </ligand>
</feature>
<feature type="binding site" evidence="1">
    <location>
        <position position="145"/>
    </location>
    <ligand>
        <name>Zn(2+)</name>
        <dbReference type="ChEBI" id="CHEBI:29105"/>
        <label>2</label>
    </ligand>
</feature>
<feature type="binding site" evidence="1">
    <location>
        <position position="179"/>
    </location>
    <ligand>
        <name>Zn(2+)</name>
        <dbReference type="ChEBI" id="CHEBI:29105"/>
        <label>2</label>
    </ligand>
</feature>
<feature type="binding site" evidence="1">
    <location>
        <position position="182"/>
    </location>
    <ligand>
        <name>Zn(2+)</name>
        <dbReference type="ChEBI" id="CHEBI:29105"/>
        <label>3</label>
    </ligand>
</feature>
<feature type="binding site" evidence="1">
    <location>
        <position position="216"/>
    </location>
    <ligand>
        <name>Zn(2+)</name>
        <dbReference type="ChEBI" id="CHEBI:29105"/>
        <label>2</label>
    </ligand>
</feature>
<feature type="binding site" evidence="1">
    <location>
        <position position="229"/>
    </location>
    <ligand>
        <name>Zn(2+)</name>
        <dbReference type="ChEBI" id="CHEBI:29105"/>
        <label>3</label>
    </ligand>
</feature>
<feature type="binding site" evidence="1">
    <location>
        <position position="231"/>
    </location>
    <ligand>
        <name>Zn(2+)</name>
        <dbReference type="ChEBI" id="CHEBI:29105"/>
        <label>3</label>
    </ligand>
</feature>
<feature type="binding site" evidence="1">
    <location>
        <position position="261"/>
    </location>
    <ligand>
        <name>Zn(2+)</name>
        <dbReference type="ChEBI" id="CHEBI:29105"/>
        <label>2</label>
    </ligand>
</feature>
<keyword id="KW-0227">DNA damage</keyword>
<keyword id="KW-0234">DNA repair</keyword>
<keyword id="KW-0255">Endonuclease</keyword>
<keyword id="KW-0378">Hydrolase</keyword>
<keyword id="KW-0479">Metal-binding</keyword>
<keyword id="KW-0540">Nuclease</keyword>
<keyword id="KW-0862">Zinc</keyword>